<proteinExistence type="inferred from homology"/>
<comment type="function">
    <text evidence="1">Catalyzes the GTP-dependent ribosomal translocation step during translation elongation. During this step, the ribosome changes from the pre-translocational (PRE) to the post-translocational (POST) state as the newly formed A-site-bound peptidyl-tRNA and P-site-bound deacylated tRNA move to the P and E sites, respectively. Catalyzes the coordinated movement of the two tRNA molecules, the mRNA and conformational changes in the ribosome.</text>
</comment>
<comment type="subcellular location">
    <subcellularLocation>
        <location evidence="1">Cytoplasm</location>
    </subcellularLocation>
</comment>
<comment type="similarity">
    <text evidence="1">Belongs to the TRAFAC class translation factor GTPase superfamily. Classic translation factor GTPase family. EF-G/EF-2 subfamily.</text>
</comment>
<dbReference type="EMBL" id="CR628336">
    <property type="protein sequence ID" value="CAH11539.1"/>
    <property type="molecule type" value="Genomic_DNA"/>
</dbReference>
<dbReference type="RefSeq" id="WP_011213006.1">
    <property type="nucleotide sequence ID" value="NC_006368.1"/>
</dbReference>
<dbReference type="SMR" id="Q5X862"/>
<dbReference type="KEGG" id="lpp:lpp0391"/>
<dbReference type="LegioList" id="lpp0391"/>
<dbReference type="HOGENOM" id="CLU_002794_4_1_6"/>
<dbReference type="GO" id="GO:0005737">
    <property type="term" value="C:cytoplasm"/>
    <property type="evidence" value="ECO:0007669"/>
    <property type="project" value="UniProtKB-SubCell"/>
</dbReference>
<dbReference type="GO" id="GO:0005525">
    <property type="term" value="F:GTP binding"/>
    <property type="evidence" value="ECO:0007669"/>
    <property type="project" value="UniProtKB-UniRule"/>
</dbReference>
<dbReference type="GO" id="GO:0003924">
    <property type="term" value="F:GTPase activity"/>
    <property type="evidence" value="ECO:0007669"/>
    <property type="project" value="InterPro"/>
</dbReference>
<dbReference type="GO" id="GO:0097216">
    <property type="term" value="F:guanosine tetraphosphate binding"/>
    <property type="evidence" value="ECO:0007669"/>
    <property type="project" value="UniProtKB-ARBA"/>
</dbReference>
<dbReference type="GO" id="GO:0003746">
    <property type="term" value="F:translation elongation factor activity"/>
    <property type="evidence" value="ECO:0007669"/>
    <property type="project" value="UniProtKB-UniRule"/>
</dbReference>
<dbReference type="GO" id="GO:0032790">
    <property type="term" value="P:ribosome disassembly"/>
    <property type="evidence" value="ECO:0007669"/>
    <property type="project" value="TreeGrafter"/>
</dbReference>
<dbReference type="CDD" id="cd01886">
    <property type="entry name" value="EF-G"/>
    <property type="match status" value="1"/>
</dbReference>
<dbReference type="CDD" id="cd16262">
    <property type="entry name" value="EFG_III"/>
    <property type="match status" value="1"/>
</dbReference>
<dbReference type="CDD" id="cd01434">
    <property type="entry name" value="EFG_mtEFG1_IV"/>
    <property type="match status" value="1"/>
</dbReference>
<dbReference type="CDD" id="cd03713">
    <property type="entry name" value="EFG_mtEFG_C"/>
    <property type="match status" value="1"/>
</dbReference>
<dbReference type="CDD" id="cd04088">
    <property type="entry name" value="EFG_mtEFG_II"/>
    <property type="match status" value="1"/>
</dbReference>
<dbReference type="FunFam" id="2.40.30.10:FF:000006">
    <property type="entry name" value="Elongation factor G"/>
    <property type="match status" value="1"/>
</dbReference>
<dbReference type="FunFam" id="3.30.230.10:FF:000003">
    <property type="entry name" value="Elongation factor G"/>
    <property type="match status" value="1"/>
</dbReference>
<dbReference type="FunFam" id="3.30.70.240:FF:000001">
    <property type="entry name" value="Elongation factor G"/>
    <property type="match status" value="1"/>
</dbReference>
<dbReference type="FunFam" id="3.30.70.870:FF:000001">
    <property type="entry name" value="Elongation factor G"/>
    <property type="match status" value="1"/>
</dbReference>
<dbReference type="FunFam" id="3.40.50.300:FF:000029">
    <property type="entry name" value="Elongation factor G"/>
    <property type="match status" value="1"/>
</dbReference>
<dbReference type="Gene3D" id="3.30.230.10">
    <property type="match status" value="1"/>
</dbReference>
<dbReference type="Gene3D" id="3.30.70.240">
    <property type="match status" value="1"/>
</dbReference>
<dbReference type="Gene3D" id="3.30.70.870">
    <property type="entry name" value="Elongation Factor G (Translational Gtpase), domain 3"/>
    <property type="match status" value="1"/>
</dbReference>
<dbReference type="Gene3D" id="3.40.50.300">
    <property type="entry name" value="P-loop containing nucleotide triphosphate hydrolases"/>
    <property type="match status" value="1"/>
</dbReference>
<dbReference type="Gene3D" id="2.40.30.10">
    <property type="entry name" value="Translation factors"/>
    <property type="match status" value="1"/>
</dbReference>
<dbReference type="HAMAP" id="MF_00054_B">
    <property type="entry name" value="EF_G_EF_2_B"/>
    <property type="match status" value="1"/>
</dbReference>
<dbReference type="InterPro" id="IPR041095">
    <property type="entry name" value="EFG_II"/>
</dbReference>
<dbReference type="InterPro" id="IPR009022">
    <property type="entry name" value="EFG_III"/>
</dbReference>
<dbReference type="InterPro" id="IPR035647">
    <property type="entry name" value="EFG_III/V"/>
</dbReference>
<dbReference type="InterPro" id="IPR047872">
    <property type="entry name" value="EFG_IV"/>
</dbReference>
<dbReference type="InterPro" id="IPR035649">
    <property type="entry name" value="EFG_V"/>
</dbReference>
<dbReference type="InterPro" id="IPR000640">
    <property type="entry name" value="EFG_V-like"/>
</dbReference>
<dbReference type="InterPro" id="IPR004161">
    <property type="entry name" value="EFTu-like_2"/>
</dbReference>
<dbReference type="InterPro" id="IPR031157">
    <property type="entry name" value="G_TR_CS"/>
</dbReference>
<dbReference type="InterPro" id="IPR027417">
    <property type="entry name" value="P-loop_NTPase"/>
</dbReference>
<dbReference type="InterPro" id="IPR020568">
    <property type="entry name" value="Ribosomal_Su5_D2-typ_SF"/>
</dbReference>
<dbReference type="InterPro" id="IPR014721">
    <property type="entry name" value="Ribsml_uS5_D2-typ_fold_subgr"/>
</dbReference>
<dbReference type="InterPro" id="IPR005225">
    <property type="entry name" value="Small_GTP-bd"/>
</dbReference>
<dbReference type="InterPro" id="IPR000795">
    <property type="entry name" value="T_Tr_GTP-bd_dom"/>
</dbReference>
<dbReference type="InterPro" id="IPR009000">
    <property type="entry name" value="Transl_B-barrel_sf"/>
</dbReference>
<dbReference type="InterPro" id="IPR004540">
    <property type="entry name" value="Transl_elong_EFG/EF2"/>
</dbReference>
<dbReference type="InterPro" id="IPR005517">
    <property type="entry name" value="Transl_elong_EFG/EF2_IV"/>
</dbReference>
<dbReference type="NCBIfam" id="TIGR00484">
    <property type="entry name" value="EF-G"/>
    <property type="match status" value="1"/>
</dbReference>
<dbReference type="NCBIfam" id="NF009379">
    <property type="entry name" value="PRK12740.1-3"/>
    <property type="match status" value="1"/>
</dbReference>
<dbReference type="NCBIfam" id="NF009381">
    <property type="entry name" value="PRK12740.1-5"/>
    <property type="match status" value="1"/>
</dbReference>
<dbReference type="NCBIfam" id="TIGR00231">
    <property type="entry name" value="small_GTP"/>
    <property type="match status" value="1"/>
</dbReference>
<dbReference type="PANTHER" id="PTHR43261:SF1">
    <property type="entry name" value="RIBOSOME-RELEASING FACTOR 2, MITOCHONDRIAL"/>
    <property type="match status" value="1"/>
</dbReference>
<dbReference type="PANTHER" id="PTHR43261">
    <property type="entry name" value="TRANSLATION ELONGATION FACTOR G-RELATED"/>
    <property type="match status" value="1"/>
</dbReference>
<dbReference type="Pfam" id="PF00679">
    <property type="entry name" value="EFG_C"/>
    <property type="match status" value="1"/>
</dbReference>
<dbReference type="Pfam" id="PF14492">
    <property type="entry name" value="EFG_III"/>
    <property type="match status" value="1"/>
</dbReference>
<dbReference type="Pfam" id="PF03764">
    <property type="entry name" value="EFG_IV"/>
    <property type="match status" value="1"/>
</dbReference>
<dbReference type="Pfam" id="PF00009">
    <property type="entry name" value="GTP_EFTU"/>
    <property type="match status" value="1"/>
</dbReference>
<dbReference type="Pfam" id="PF03144">
    <property type="entry name" value="GTP_EFTU_D2"/>
    <property type="match status" value="1"/>
</dbReference>
<dbReference type="PRINTS" id="PR00315">
    <property type="entry name" value="ELONGATNFCT"/>
</dbReference>
<dbReference type="SMART" id="SM00838">
    <property type="entry name" value="EFG_C"/>
    <property type="match status" value="1"/>
</dbReference>
<dbReference type="SMART" id="SM00889">
    <property type="entry name" value="EFG_IV"/>
    <property type="match status" value="1"/>
</dbReference>
<dbReference type="SUPFAM" id="SSF54980">
    <property type="entry name" value="EF-G C-terminal domain-like"/>
    <property type="match status" value="2"/>
</dbReference>
<dbReference type="SUPFAM" id="SSF52540">
    <property type="entry name" value="P-loop containing nucleoside triphosphate hydrolases"/>
    <property type="match status" value="1"/>
</dbReference>
<dbReference type="SUPFAM" id="SSF54211">
    <property type="entry name" value="Ribosomal protein S5 domain 2-like"/>
    <property type="match status" value="1"/>
</dbReference>
<dbReference type="SUPFAM" id="SSF50447">
    <property type="entry name" value="Translation proteins"/>
    <property type="match status" value="1"/>
</dbReference>
<dbReference type="PROSITE" id="PS00301">
    <property type="entry name" value="G_TR_1"/>
    <property type="match status" value="1"/>
</dbReference>
<dbReference type="PROSITE" id="PS51722">
    <property type="entry name" value="G_TR_2"/>
    <property type="match status" value="1"/>
</dbReference>
<organism>
    <name type="scientific">Legionella pneumophila (strain Paris)</name>
    <dbReference type="NCBI Taxonomy" id="297246"/>
    <lineage>
        <taxon>Bacteria</taxon>
        <taxon>Pseudomonadati</taxon>
        <taxon>Pseudomonadota</taxon>
        <taxon>Gammaproteobacteria</taxon>
        <taxon>Legionellales</taxon>
        <taxon>Legionellaceae</taxon>
        <taxon>Legionella</taxon>
    </lineage>
</organism>
<protein>
    <recommendedName>
        <fullName evidence="1">Elongation factor G</fullName>
        <shortName evidence="1">EF-G</shortName>
    </recommendedName>
</protein>
<feature type="chain" id="PRO_0000091140" description="Elongation factor G">
    <location>
        <begin position="1"/>
        <end position="694"/>
    </location>
</feature>
<feature type="domain" description="tr-type G">
    <location>
        <begin position="6"/>
        <end position="288"/>
    </location>
</feature>
<feature type="binding site" evidence="1">
    <location>
        <begin position="15"/>
        <end position="22"/>
    </location>
    <ligand>
        <name>GTP</name>
        <dbReference type="ChEBI" id="CHEBI:37565"/>
    </ligand>
</feature>
<feature type="binding site" evidence="1">
    <location>
        <begin position="86"/>
        <end position="90"/>
    </location>
    <ligand>
        <name>GTP</name>
        <dbReference type="ChEBI" id="CHEBI:37565"/>
    </ligand>
</feature>
<feature type="binding site" evidence="1">
    <location>
        <begin position="140"/>
        <end position="143"/>
    </location>
    <ligand>
        <name>GTP</name>
        <dbReference type="ChEBI" id="CHEBI:37565"/>
    </ligand>
</feature>
<reference key="1">
    <citation type="journal article" date="2004" name="Nat. Genet.">
        <title>Evidence in the Legionella pneumophila genome for exploitation of host cell functions and high genome plasticity.</title>
        <authorList>
            <person name="Cazalet C."/>
            <person name="Rusniok C."/>
            <person name="Brueggemann H."/>
            <person name="Zidane N."/>
            <person name="Magnier A."/>
            <person name="Ma L."/>
            <person name="Tichit M."/>
            <person name="Jarraud S."/>
            <person name="Bouchier C."/>
            <person name="Vandenesch F."/>
            <person name="Kunst F."/>
            <person name="Etienne J."/>
            <person name="Glaser P."/>
            <person name="Buchrieser C."/>
        </authorList>
    </citation>
    <scope>NUCLEOTIDE SEQUENCE [LARGE SCALE GENOMIC DNA]</scope>
    <source>
        <strain>Paris</strain>
    </source>
</reference>
<keyword id="KW-0963">Cytoplasm</keyword>
<keyword id="KW-0251">Elongation factor</keyword>
<keyword id="KW-0342">GTP-binding</keyword>
<keyword id="KW-0547">Nucleotide-binding</keyword>
<keyword id="KW-0648">Protein biosynthesis</keyword>
<sequence>MATPLKLYRNIGIAAHVDAGKTTTTERVLYYTGMSHKIGEVHDGAATMDWMVQEQERGITITSAATTCYWSGMDKQFESHRINIIDTPGHVDFMIEVERSLRVLDGAVVVFDSVAGVEPQSETVWRQANKYGVPRIVFVNKMDRMGANFLRVVSQIKQRLGSTPVVLQLPIGAEEEFKGVIDLIKMKAIHWDEENKGMTFKYVDIPADLKATCEEYRAHIIEAAAEYSEELMEKYLEGEEFTEAEIKKALRHLTITNKVVPVFCGSAFKNKGVQAVLDGVIEYLPSPTDIPDIQGVDEHGDEIHRKTSYDEPFSALAFKIATDPFVGTLTYFRAYSGILKSGDTVYNSVKGKKERIGRLLQMHANSREEIKEVRAGDIAAAVGLKTVTTGDTLCDQDKVVILERMDFPDPVIAVAVEPKTKADQEKMGIALGKLAQEDPSFRVHTDEESGQTIIQGMGELHLEIIVDRMKREFNVEANVGKPQVAYRETLKQAVEQEGKFVRQSGGRGQYGHVWLKIEPQEPGKGYEFINAIVGGVIPKEYIPAVDKGIQEQMQNGVIAGYPVVDVKVTLFDGSFHEVDSSEMAFKIAGSQCFKQGALKAKPVLLEPIMSVEVVTPEDYMGDVMGDLNRRRGLVQGMEDSPAGKIVRAEVPLAEMFGYSTDLRSATQGRATYTMEFCKYAEAPTNIAEAIIKKQ</sequence>
<evidence type="ECO:0000255" key="1">
    <source>
        <dbReference type="HAMAP-Rule" id="MF_00054"/>
    </source>
</evidence>
<accession>Q5X862</accession>
<name>EFG_LEGPA</name>
<gene>
    <name evidence="1" type="primary">fusA</name>
    <name type="ordered locus">lpp0391</name>
</gene>